<proteinExistence type="evidence at protein level"/>
<keyword id="KW-0002">3D-structure</keyword>
<keyword id="KW-0067">ATP-binding</keyword>
<keyword id="KW-0418">Kinase</keyword>
<keyword id="KW-0479">Metal-binding</keyword>
<keyword id="KW-0547">Nucleotide-binding</keyword>
<keyword id="KW-0630">Potassium</keyword>
<keyword id="KW-1185">Reference proteome</keyword>
<keyword id="KW-0808">Transferase</keyword>
<gene>
    <name evidence="7" type="ordered locus">STM4066</name>
</gene>
<sequence length="319" mass="34238">MKAMNKVWVIGDASVDLVPEKQNSYLKCPGGASANVGVCVARLGGECGFIGCLGDDDAGRFLRQVFQDNGVDVTFLRLDADLTSAVLIVNLTADGERSFTYLVHPGADTYVSPQDLPPFRQYEWFYFSSIGLTDRPAREACLEGARRMREAGGYVLFDVNLRSKMWGNTDEIPELIARSAALASICKVSADELCQLSGASHWQDARYYLRDLGCDTTIISLGADGALLITAEGEFHFPAPRVDVVDTTGAGDAFVGGLLFTLSRANCWDHALLAEAISNANACGAMAVTAKGAMTALPFPDQLNTFLSSHSLAQAMTVK</sequence>
<protein>
    <recommendedName>
        <fullName evidence="4">Aminoimidazole riboside kinase</fullName>
        <shortName evidence="3">AIRs kinase</shortName>
        <ecNumber evidence="1">2.7.1.223</ecNumber>
    </recommendedName>
</protein>
<name>AIRSK_SALTY</name>
<feature type="chain" id="PRO_0000452103" description="Aminoimidazole riboside kinase">
    <location>
        <begin position="1"/>
        <end position="319"/>
    </location>
</feature>
<feature type="active site" description="Proton acceptor" evidence="6 9">
    <location>
        <position position="252"/>
    </location>
</feature>
<feature type="binding site" evidence="2 9 10">
    <location>
        <position position="16"/>
    </location>
    <ligand>
        <name>5-amino-1-(beta-D-ribosyl)imidazole</name>
        <dbReference type="ChEBI" id="CHEBI:142407"/>
    </ligand>
</feature>
<feature type="binding site" evidence="2 9 10">
    <location>
        <position position="31"/>
    </location>
    <ligand>
        <name>5-amino-1-(beta-D-ribosyl)imidazole</name>
        <dbReference type="ChEBI" id="CHEBI:142407"/>
    </ligand>
</feature>
<feature type="binding site" evidence="2 10">
    <location>
        <position position="101"/>
    </location>
    <ligand>
        <name>5-amino-1-(beta-D-ribosyl)imidazole</name>
        <dbReference type="ChEBI" id="CHEBI:142407"/>
    </ligand>
</feature>
<feature type="binding site" evidence="6 10">
    <location>
        <begin position="158"/>
        <end position="160"/>
    </location>
    <ligand>
        <name>ATP</name>
        <dbReference type="ChEBI" id="CHEBI:30616"/>
    </ligand>
</feature>
<feature type="binding site" evidence="2 9 10">
    <location>
        <position position="162"/>
    </location>
    <ligand>
        <name>5-amino-1-(beta-D-ribosyl)imidazole</name>
        <dbReference type="ChEBI" id="CHEBI:142407"/>
    </ligand>
</feature>
<feature type="binding site" evidence="2 8 9 10">
    <location>
        <position position="180"/>
    </location>
    <ligand>
        <name>K(+)</name>
        <dbReference type="ChEBI" id="CHEBI:29103"/>
        <label>1</label>
    </ligand>
</feature>
<feature type="binding site" evidence="2 8 9 10">
    <location>
        <position position="181"/>
    </location>
    <ligand>
        <name>K(+)</name>
        <dbReference type="ChEBI" id="CHEBI:29103"/>
        <label>1</label>
    </ligand>
</feature>
<feature type="binding site" evidence="2 8 9 10">
    <location>
        <position position="183"/>
    </location>
    <ligand>
        <name>K(+)</name>
        <dbReference type="ChEBI" id="CHEBI:29103"/>
        <label>1</label>
    </ligand>
</feature>
<feature type="binding site" evidence="6 10">
    <location>
        <position position="187"/>
    </location>
    <ligand>
        <name>ATP</name>
        <dbReference type="ChEBI" id="CHEBI:30616"/>
    </ligand>
</feature>
<feature type="binding site" evidence="6 10">
    <location>
        <position position="192"/>
    </location>
    <ligand>
        <name>ATP</name>
        <dbReference type="ChEBI" id="CHEBI:30616"/>
    </ligand>
</feature>
<feature type="binding site" evidence="2 8 9 10">
    <location>
        <position position="213"/>
    </location>
    <ligand>
        <name>K(+)</name>
        <dbReference type="ChEBI" id="CHEBI:29103"/>
        <label>1</label>
    </ligand>
</feature>
<feature type="binding site" evidence="6 10">
    <location>
        <begin position="220"/>
        <end position="225"/>
    </location>
    <ligand>
        <name>ATP</name>
        <dbReference type="ChEBI" id="CHEBI:30616"/>
    </ligand>
</feature>
<feature type="binding site" evidence="2 8 9 10">
    <location>
        <position position="246"/>
    </location>
    <ligand>
        <name>K(+)</name>
        <dbReference type="ChEBI" id="CHEBI:29103"/>
        <label>2</label>
    </ligand>
</feature>
<feature type="binding site" evidence="2 8 9 10">
    <location>
        <position position="248"/>
    </location>
    <ligand>
        <name>K(+)</name>
        <dbReference type="ChEBI" id="CHEBI:29103"/>
        <label>2</label>
    </ligand>
</feature>
<feature type="binding site" evidence="2 9 10">
    <location>
        <position position="252"/>
    </location>
    <ligand>
        <name>5-amino-1-(beta-D-ribosyl)imidazole</name>
        <dbReference type="ChEBI" id="CHEBI:142407"/>
    </ligand>
</feature>
<feature type="binding site" evidence="6 10">
    <location>
        <position position="281"/>
    </location>
    <ligand>
        <name>ATP</name>
        <dbReference type="ChEBI" id="CHEBI:30616"/>
    </ligand>
</feature>
<feature type="binding site" evidence="2 8 9 10">
    <location>
        <position position="287"/>
    </location>
    <ligand>
        <name>K(+)</name>
        <dbReference type="ChEBI" id="CHEBI:29103"/>
        <label>2</label>
    </ligand>
</feature>
<feature type="binding site" evidence="2 9 10">
    <location>
        <position position="290"/>
    </location>
    <ligand>
        <name>K(+)</name>
        <dbReference type="ChEBI" id="CHEBI:29103"/>
        <label>2</label>
    </ligand>
</feature>
<feature type="binding site" evidence="2 9 10">
    <location>
        <position position="292"/>
    </location>
    <ligand>
        <name>K(+)</name>
        <dbReference type="ChEBI" id="CHEBI:29103"/>
        <label>2</label>
    </ligand>
</feature>
<feature type="strand" evidence="11">
    <location>
        <begin position="7"/>
        <end position="11"/>
    </location>
</feature>
<feature type="strand" evidence="11">
    <location>
        <begin position="14"/>
        <end position="19"/>
    </location>
</feature>
<feature type="strand" evidence="11">
    <location>
        <begin position="21"/>
        <end position="30"/>
    </location>
</feature>
<feature type="helix" evidence="11">
    <location>
        <begin position="32"/>
        <end position="42"/>
    </location>
</feature>
<feature type="strand" evidence="11">
    <location>
        <begin position="47"/>
        <end position="53"/>
    </location>
</feature>
<feature type="helix" evidence="11">
    <location>
        <begin position="57"/>
        <end position="67"/>
    </location>
</feature>
<feature type="turn" evidence="11">
    <location>
        <begin position="68"/>
        <end position="70"/>
    </location>
</feature>
<feature type="strand" evidence="11">
    <location>
        <begin position="76"/>
        <end position="78"/>
    </location>
</feature>
<feature type="strand" evidence="11">
    <location>
        <begin position="86"/>
        <end position="89"/>
    </location>
</feature>
<feature type="strand" evidence="11">
    <location>
        <begin position="99"/>
        <end position="101"/>
    </location>
</feature>
<feature type="strand" evidence="12">
    <location>
        <begin position="103"/>
        <end position="105"/>
    </location>
</feature>
<feature type="helix" evidence="11">
    <location>
        <begin position="107"/>
        <end position="110"/>
    </location>
</feature>
<feature type="helix" evidence="11">
    <location>
        <begin position="113"/>
        <end position="115"/>
    </location>
</feature>
<feature type="strand" evidence="11">
    <location>
        <begin position="124"/>
        <end position="128"/>
    </location>
</feature>
<feature type="helix" evidence="11">
    <location>
        <begin position="129"/>
        <end position="132"/>
    </location>
</feature>
<feature type="helix" evidence="11">
    <location>
        <begin position="135"/>
        <end position="150"/>
    </location>
</feature>
<feature type="strand" evidence="11">
    <location>
        <begin position="154"/>
        <end position="158"/>
    </location>
</feature>
<feature type="helix" evidence="11">
    <location>
        <begin position="163"/>
        <end position="165"/>
    </location>
</feature>
<feature type="helix" evidence="11">
    <location>
        <begin position="169"/>
        <end position="171"/>
    </location>
</feature>
<feature type="helix" evidence="11">
    <location>
        <begin position="172"/>
        <end position="182"/>
    </location>
</feature>
<feature type="strand" evidence="11">
    <location>
        <begin position="184"/>
        <end position="189"/>
    </location>
</feature>
<feature type="helix" evidence="11">
    <location>
        <begin position="190"/>
        <end position="197"/>
    </location>
</feature>
<feature type="helix" evidence="11">
    <location>
        <begin position="202"/>
        <end position="205"/>
    </location>
</feature>
<feature type="turn" evidence="12">
    <location>
        <begin position="206"/>
        <end position="209"/>
    </location>
</feature>
<feature type="helix" evidence="11">
    <location>
        <begin position="210"/>
        <end position="212"/>
    </location>
</feature>
<feature type="strand" evidence="11">
    <location>
        <begin position="217"/>
        <end position="220"/>
    </location>
</feature>
<feature type="helix" evidence="11">
    <location>
        <begin position="222"/>
        <end position="224"/>
    </location>
</feature>
<feature type="strand" evidence="11">
    <location>
        <begin position="226"/>
        <end position="232"/>
    </location>
</feature>
<feature type="strand" evidence="11">
    <location>
        <begin position="234"/>
        <end position="237"/>
    </location>
</feature>
<feature type="helix" evidence="11">
    <location>
        <begin position="250"/>
        <end position="262"/>
    </location>
</feature>
<feature type="strand" evidence="11">
    <location>
        <begin position="265"/>
        <end position="267"/>
    </location>
</feature>
<feature type="helix" evidence="11">
    <location>
        <begin position="270"/>
        <end position="286"/>
    </location>
</feature>
<feature type="helix" evidence="11">
    <location>
        <begin position="287"/>
        <end position="289"/>
    </location>
</feature>
<feature type="strand" evidence="11">
    <location>
        <begin position="290"/>
        <end position="292"/>
    </location>
</feature>
<feature type="turn" evidence="11">
    <location>
        <begin position="293"/>
        <end position="296"/>
    </location>
</feature>
<feature type="helix" evidence="11">
    <location>
        <begin position="300"/>
        <end position="307"/>
    </location>
</feature>
<accession>Q8ZKR2</accession>
<reference key="1">
    <citation type="journal article" date="2001" name="Nature">
        <title>Complete genome sequence of Salmonella enterica serovar Typhimurium LT2.</title>
        <authorList>
            <person name="McClelland M."/>
            <person name="Sanderson K.E."/>
            <person name="Spieth J."/>
            <person name="Clifton S.W."/>
            <person name="Latreille P."/>
            <person name="Courtney L."/>
            <person name="Porwollik S."/>
            <person name="Ali J."/>
            <person name="Dante M."/>
            <person name="Du F."/>
            <person name="Hou S."/>
            <person name="Layman D."/>
            <person name="Leonard S."/>
            <person name="Nguyen C."/>
            <person name="Scott K."/>
            <person name="Holmes A."/>
            <person name="Grewal N."/>
            <person name="Mulvaney E."/>
            <person name="Ryan E."/>
            <person name="Sun H."/>
            <person name="Florea L."/>
            <person name="Miller W."/>
            <person name="Stoneking T."/>
            <person name="Nhan M."/>
            <person name="Waterston R."/>
            <person name="Wilson R.K."/>
        </authorList>
    </citation>
    <scope>NUCLEOTIDE SEQUENCE [LARGE SCALE GENOMIC DNA]</scope>
    <source>
        <strain>LT2 / SGSC1412 / ATCC 700720</strain>
    </source>
</reference>
<reference key="2">
    <citation type="journal article" date="2003" name="J. Bacteriol.">
        <title>The stm4066 gene product of Salmonella enterica serovar Typhimurium has aminoimidazole riboside (AIRs) kinase activity and allows AIRs to satisfy the thiamine requirement of pur mutant strains.</title>
        <authorList>
            <person name="Dougherty M."/>
            <person name="Downs D.M."/>
        </authorList>
    </citation>
    <scope>FUNCTION</scope>
    <scope>CATALYTIC ACTIVITY</scope>
    <scope>INDUCTION</scope>
    <scope>DISRUPTION PHENOTYPE</scope>
    <source>
        <strain>LT2</strain>
    </source>
</reference>
<reference evidence="8 9 10" key="3">
    <citation type="journal article" date="2004" name="Structure">
        <title>Crystal structure of an aminoimidazole riboside kinase from Salmonella enterica: implications for the evolution of the ribokinase superfamily.</title>
        <authorList>
            <person name="Zhang Y."/>
            <person name="Dougherty M."/>
            <person name="Downs D.M."/>
            <person name="Ealick S.E."/>
        </authorList>
    </citation>
    <scope>X-RAY CRYSTALLOGRAPHY (2.60 ANGSTROMS) OF APOENZYME AND IN COMPLEXES WITH AMINOIMIDAZOLE RIBOSIDE; ATP ANALOG AND POTASSIUM IONS</scope>
    <scope>ACTIVITY REGULATION</scope>
    <scope>SUBUNIT</scope>
    <scope>DOMAIN</scope>
    <scope>ACTIVE SITE</scope>
</reference>
<evidence type="ECO:0000269" key="1">
    <source>
    </source>
</evidence>
<evidence type="ECO:0000269" key="2">
    <source>
    </source>
</evidence>
<evidence type="ECO:0000303" key="3">
    <source>
    </source>
</evidence>
<evidence type="ECO:0000303" key="4">
    <source>
    </source>
</evidence>
<evidence type="ECO:0000305" key="5"/>
<evidence type="ECO:0000305" key="6">
    <source>
    </source>
</evidence>
<evidence type="ECO:0000312" key="7">
    <source>
        <dbReference type="EMBL" id="AAL22906.1"/>
    </source>
</evidence>
<evidence type="ECO:0007744" key="8">
    <source>
        <dbReference type="PDB" id="1TYY"/>
    </source>
</evidence>
<evidence type="ECO:0007744" key="9">
    <source>
        <dbReference type="PDB" id="1TZ3"/>
    </source>
</evidence>
<evidence type="ECO:0007744" key="10">
    <source>
        <dbReference type="PDB" id="1TZ6"/>
    </source>
</evidence>
<evidence type="ECO:0007829" key="11">
    <source>
        <dbReference type="PDB" id="1TYY"/>
    </source>
</evidence>
<evidence type="ECO:0007829" key="12">
    <source>
        <dbReference type="PDB" id="1TZ6"/>
    </source>
</evidence>
<comment type="function">
    <text evidence="1">Phosphorylates 5-amino-1-(beta-D-ribosyl)imidazole (AIRs) to form 5-amino-1-(5-phospho-beta-D-ribosyl)imidazole (AIR), an important intermediate in the purine and thiamine biosynthetic pathways (PubMed:12486071). It allows the use of exogenous aminoimidazole riboside (AIRs) to satisfy the cellular requirement for purines and thiamine (PubMed:12486071).</text>
</comment>
<comment type="catalytic activity">
    <reaction evidence="1">
        <text>5-amino-1-(beta-D-ribosyl)imidazole + ATP = 5-amino-1-(5-phospho-beta-D-ribosyl)imidazole + ADP + H(+)</text>
        <dbReference type="Rhea" id="RHEA:44748"/>
        <dbReference type="ChEBI" id="CHEBI:15378"/>
        <dbReference type="ChEBI" id="CHEBI:30616"/>
        <dbReference type="ChEBI" id="CHEBI:137981"/>
        <dbReference type="ChEBI" id="CHEBI:142407"/>
        <dbReference type="ChEBI" id="CHEBI:456216"/>
        <dbReference type="EC" id="2.7.1.223"/>
    </reaction>
    <physiologicalReaction direction="left-to-right" evidence="1">
        <dbReference type="Rhea" id="RHEA:44749"/>
    </physiologicalReaction>
</comment>
<comment type="activity regulation">
    <text evidence="6">Potassium may regulate kinase activity.</text>
</comment>
<comment type="subunit">
    <text evidence="2">Homodimer.</text>
</comment>
<comment type="induction">
    <text evidence="1">Repressed by STM4068.</text>
</comment>
<comment type="domain">
    <text evidence="2">Does not show significant conformational changes upon substrate binding.</text>
</comment>
<comment type="disruption phenotype">
    <text evidence="1">Disruption of the gene prevents the efficient use of AIRs as a source of thiamine.</text>
</comment>
<comment type="similarity">
    <text evidence="5">Belongs to the carbohydrate kinase PfkB family.</text>
</comment>
<organism>
    <name type="scientific">Salmonella typhimurium (strain LT2 / SGSC1412 / ATCC 700720)</name>
    <dbReference type="NCBI Taxonomy" id="99287"/>
    <lineage>
        <taxon>Bacteria</taxon>
        <taxon>Pseudomonadati</taxon>
        <taxon>Pseudomonadota</taxon>
        <taxon>Gammaproteobacteria</taxon>
        <taxon>Enterobacterales</taxon>
        <taxon>Enterobacteriaceae</taxon>
        <taxon>Salmonella</taxon>
    </lineage>
</organism>
<dbReference type="EC" id="2.7.1.223" evidence="1"/>
<dbReference type="EMBL" id="AE006468">
    <property type="protein sequence ID" value="AAL22906.1"/>
    <property type="molecule type" value="Genomic_DNA"/>
</dbReference>
<dbReference type="RefSeq" id="NP_462947.1">
    <property type="nucleotide sequence ID" value="NC_003197.2"/>
</dbReference>
<dbReference type="RefSeq" id="WP_000646499.1">
    <property type="nucleotide sequence ID" value="NC_003197.2"/>
</dbReference>
<dbReference type="PDB" id="1TYY">
    <property type="method" value="X-ray"/>
    <property type="resolution" value="2.60 A"/>
    <property type="chains" value="A/B=1-319"/>
</dbReference>
<dbReference type="PDB" id="1TZ3">
    <property type="method" value="X-ray"/>
    <property type="resolution" value="2.90 A"/>
    <property type="chains" value="A/B=1-319"/>
</dbReference>
<dbReference type="PDB" id="1TZ6">
    <property type="method" value="X-ray"/>
    <property type="resolution" value="2.70 A"/>
    <property type="chains" value="A/B=1-319"/>
</dbReference>
<dbReference type="PDBsum" id="1TYY"/>
<dbReference type="PDBsum" id="1TZ3"/>
<dbReference type="PDBsum" id="1TZ6"/>
<dbReference type="SMR" id="Q8ZKR2"/>
<dbReference type="STRING" id="99287.STM4066"/>
<dbReference type="DrugBank" id="DB04568">
    <property type="generic name" value="5-Aminoimidazole Ribonucleoside"/>
</dbReference>
<dbReference type="DrugBank" id="DB03909">
    <property type="generic name" value="Adenosine-5'-[Beta, Gamma-Methylene]Triphosphate"/>
</dbReference>
<dbReference type="PaxDb" id="99287-STM4066"/>
<dbReference type="GeneID" id="1255593"/>
<dbReference type="KEGG" id="stm:STM4066"/>
<dbReference type="PATRIC" id="fig|99287.12.peg.4286"/>
<dbReference type="HOGENOM" id="CLU_027634_6_1_6"/>
<dbReference type="OMA" id="NWRPTFW"/>
<dbReference type="PhylomeDB" id="Q8ZKR2"/>
<dbReference type="BioCyc" id="MetaCyc:STM4066-MONOMER"/>
<dbReference type="BioCyc" id="SENT99287:STM4066-MONOMER"/>
<dbReference type="BRENDA" id="2.7.1.223">
    <property type="organism ID" value="5542"/>
</dbReference>
<dbReference type="EvolutionaryTrace" id="Q8ZKR2"/>
<dbReference type="Proteomes" id="UP000001014">
    <property type="component" value="Chromosome"/>
</dbReference>
<dbReference type="GO" id="GO:0005524">
    <property type="term" value="F:ATP binding"/>
    <property type="evidence" value="ECO:0007669"/>
    <property type="project" value="UniProtKB-KW"/>
</dbReference>
<dbReference type="GO" id="GO:0008865">
    <property type="term" value="F:fructokinase activity"/>
    <property type="evidence" value="ECO:0007669"/>
    <property type="project" value="UniProtKB-ARBA"/>
</dbReference>
<dbReference type="GO" id="GO:0046872">
    <property type="term" value="F:metal ion binding"/>
    <property type="evidence" value="ECO:0007669"/>
    <property type="project" value="UniProtKB-KW"/>
</dbReference>
<dbReference type="GO" id="GO:0006000">
    <property type="term" value="P:fructose metabolic process"/>
    <property type="evidence" value="ECO:0007669"/>
    <property type="project" value="UniProtKB-ARBA"/>
</dbReference>
<dbReference type="CDD" id="cd01167">
    <property type="entry name" value="bac_FRK"/>
    <property type="match status" value="1"/>
</dbReference>
<dbReference type="FunFam" id="3.40.1190.20:FF:000057">
    <property type="entry name" value="Aminoimidazole riboside kinase"/>
    <property type="match status" value="1"/>
</dbReference>
<dbReference type="Gene3D" id="3.40.1190.20">
    <property type="match status" value="1"/>
</dbReference>
<dbReference type="InterPro" id="IPR002173">
    <property type="entry name" value="Carboh/pur_kinase_PfkB_CS"/>
</dbReference>
<dbReference type="InterPro" id="IPR050306">
    <property type="entry name" value="PfkB_Carbo_kinase"/>
</dbReference>
<dbReference type="InterPro" id="IPR011611">
    <property type="entry name" value="PfkB_dom"/>
</dbReference>
<dbReference type="InterPro" id="IPR002139">
    <property type="entry name" value="Ribo/fructo_kinase"/>
</dbReference>
<dbReference type="InterPro" id="IPR029056">
    <property type="entry name" value="Ribokinase-like"/>
</dbReference>
<dbReference type="NCBIfam" id="NF006957">
    <property type="entry name" value="PRK09434.1"/>
    <property type="match status" value="1"/>
</dbReference>
<dbReference type="PANTHER" id="PTHR43085">
    <property type="entry name" value="HEXOKINASE FAMILY MEMBER"/>
    <property type="match status" value="1"/>
</dbReference>
<dbReference type="PANTHER" id="PTHR43085:SF1">
    <property type="entry name" value="PSEUDOURIDINE KINASE-RELATED"/>
    <property type="match status" value="1"/>
</dbReference>
<dbReference type="Pfam" id="PF00294">
    <property type="entry name" value="PfkB"/>
    <property type="match status" value="1"/>
</dbReference>
<dbReference type="PRINTS" id="PR00990">
    <property type="entry name" value="RIBOKINASE"/>
</dbReference>
<dbReference type="SUPFAM" id="SSF53613">
    <property type="entry name" value="Ribokinase-like"/>
    <property type="match status" value="1"/>
</dbReference>
<dbReference type="PROSITE" id="PS00584">
    <property type="entry name" value="PFKB_KINASES_2"/>
    <property type="match status" value="1"/>
</dbReference>